<sequence length="212" mass="23669">MSSIDKTQRITQSDALPGRSTPMPVARLHVVHEHSMTHVPDHMSVAIFAMGCFWGVERLFWQQPGIYSTAAGYIGGYTPNPTYREVCSGQTDHAEAVRVVFDPAVISYDQLLQLFWENHDPAQGMRQGGDIGSQYRSAIYTLTPEQEQAAQESLQRFQQAMREKGDVRAISTEIVPAGPFYYAEDDHQQYLYKNPNGYCGLGGIGVCLPPPR</sequence>
<evidence type="ECO:0000255" key="1">
    <source>
        <dbReference type="HAMAP-Rule" id="MF_01401"/>
    </source>
</evidence>
<evidence type="ECO:0000256" key="2">
    <source>
        <dbReference type="SAM" id="MobiDB-lite"/>
    </source>
</evidence>
<protein>
    <recommendedName>
        <fullName evidence="1">Peptide methionine sulfoxide reductase MsrA</fullName>
        <shortName evidence="1">Protein-methionine-S-oxide reductase</shortName>
        <ecNumber evidence="1">1.8.4.11</ecNumber>
    </recommendedName>
    <alternativeName>
        <fullName evidence="1">Peptide-methionine (S)-S-oxide reductase</fullName>
        <shortName evidence="1">Peptide Met(O) reductase</shortName>
    </alternativeName>
</protein>
<keyword id="KW-0560">Oxidoreductase</keyword>
<name>MSRA_PECCP</name>
<accession>C6DDM6</accession>
<feature type="chain" id="PRO_1000215189" description="Peptide methionine sulfoxide reductase MsrA">
    <location>
        <begin position="1"/>
        <end position="212"/>
    </location>
</feature>
<feature type="region of interest" description="Disordered" evidence="2">
    <location>
        <begin position="1"/>
        <end position="21"/>
    </location>
</feature>
<feature type="compositionally biased region" description="Polar residues" evidence="2">
    <location>
        <begin position="1"/>
        <end position="14"/>
    </location>
</feature>
<feature type="active site" evidence="1">
    <location>
        <position position="52"/>
    </location>
</feature>
<organism>
    <name type="scientific">Pectobacterium carotovorum subsp. carotovorum (strain PC1)</name>
    <dbReference type="NCBI Taxonomy" id="561230"/>
    <lineage>
        <taxon>Bacteria</taxon>
        <taxon>Pseudomonadati</taxon>
        <taxon>Pseudomonadota</taxon>
        <taxon>Gammaproteobacteria</taxon>
        <taxon>Enterobacterales</taxon>
        <taxon>Pectobacteriaceae</taxon>
        <taxon>Pectobacterium</taxon>
    </lineage>
</organism>
<dbReference type="EC" id="1.8.4.11" evidence="1"/>
<dbReference type="EMBL" id="CP001657">
    <property type="protein sequence ID" value="ACT14433.1"/>
    <property type="molecule type" value="Genomic_DNA"/>
</dbReference>
<dbReference type="RefSeq" id="WP_015841563.1">
    <property type="nucleotide sequence ID" value="NC_012917.1"/>
</dbReference>
<dbReference type="SMR" id="C6DDM6"/>
<dbReference type="STRING" id="561230.PC1_3417"/>
<dbReference type="KEGG" id="pct:PC1_3417"/>
<dbReference type="eggNOG" id="COG0225">
    <property type="taxonomic scope" value="Bacteria"/>
</dbReference>
<dbReference type="HOGENOM" id="CLU_031040_10_3_6"/>
<dbReference type="OrthoDB" id="4174719at2"/>
<dbReference type="Proteomes" id="UP000002736">
    <property type="component" value="Chromosome"/>
</dbReference>
<dbReference type="GO" id="GO:0005737">
    <property type="term" value="C:cytoplasm"/>
    <property type="evidence" value="ECO:0007669"/>
    <property type="project" value="TreeGrafter"/>
</dbReference>
<dbReference type="GO" id="GO:0036456">
    <property type="term" value="F:L-methionine-(S)-S-oxide reductase activity"/>
    <property type="evidence" value="ECO:0007669"/>
    <property type="project" value="TreeGrafter"/>
</dbReference>
<dbReference type="GO" id="GO:0008113">
    <property type="term" value="F:peptide-methionine (S)-S-oxide reductase activity"/>
    <property type="evidence" value="ECO:0007669"/>
    <property type="project" value="UniProtKB-UniRule"/>
</dbReference>
<dbReference type="GO" id="GO:0034599">
    <property type="term" value="P:cellular response to oxidative stress"/>
    <property type="evidence" value="ECO:0007669"/>
    <property type="project" value="TreeGrafter"/>
</dbReference>
<dbReference type="GO" id="GO:0036211">
    <property type="term" value="P:protein modification process"/>
    <property type="evidence" value="ECO:0007669"/>
    <property type="project" value="UniProtKB-UniRule"/>
</dbReference>
<dbReference type="FunFam" id="3.30.1060.10:FF:000001">
    <property type="entry name" value="Peptide methionine sulfoxide reductase MsrA"/>
    <property type="match status" value="1"/>
</dbReference>
<dbReference type="Gene3D" id="3.30.1060.10">
    <property type="entry name" value="Peptide methionine sulphoxide reductase MsrA"/>
    <property type="match status" value="1"/>
</dbReference>
<dbReference type="HAMAP" id="MF_01401">
    <property type="entry name" value="MsrA"/>
    <property type="match status" value="1"/>
</dbReference>
<dbReference type="InterPro" id="IPR002569">
    <property type="entry name" value="Met_Sox_Rdtase_MsrA_dom"/>
</dbReference>
<dbReference type="InterPro" id="IPR036509">
    <property type="entry name" value="Met_Sox_Rdtase_MsrA_sf"/>
</dbReference>
<dbReference type="InterPro" id="IPR050162">
    <property type="entry name" value="MsrA_MetSO_reductase"/>
</dbReference>
<dbReference type="NCBIfam" id="TIGR00401">
    <property type="entry name" value="msrA"/>
    <property type="match status" value="1"/>
</dbReference>
<dbReference type="PANTHER" id="PTHR42799">
    <property type="entry name" value="MITOCHONDRIAL PEPTIDE METHIONINE SULFOXIDE REDUCTASE"/>
    <property type="match status" value="1"/>
</dbReference>
<dbReference type="PANTHER" id="PTHR42799:SF2">
    <property type="entry name" value="MITOCHONDRIAL PEPTIDE METHIONINE SULFOXIDE REDUCTASE"/>
    <property type="match status" value="1"/>
</dbReference>
<dbReference type="Pfam" id="PF01625">
    <property type="entry name" value="PMSR"/>
    <property type="match status" value="1"/>
</dbReference>
<dbReference type="SUPFAM" id="SSF55068">
    <property type="entry name" value="Peptide methionine sulfoxide reductase"/>
    <property type="match status" value="1"/>
</dbReference>
<proteinExistence type="inferred from homology"/>
<gene>
    <name evidence="1" type="primary">msrA</name>
    <name type="ordered locus">PC1_3417</name>
</gene>
<reference key="1">
    <citation type="submission" date="2009-07" db="EMBL/GenBank/DDBJ databases">
        <title>Complete sequence of Pectobacterium carotovorum subsp. carotovorum PC1.</title>
        <authorList>
            <consortium name="US DOE Joint Genome Institute"/>
            <person name="Lucas S."/>
            <person name="Copeland A."/>
            <person name="Lapidus A."/>
            <person name="Glavina del Rio T."/>
            <person name="Tice H."/>
            <person name="Bruce D."/>
            <person name="Goodwin L."/>
            <person name="Pitluck S."/>
            <person name="Munk A.C."/>
            <person name="Brettin T."/>
            <person name="Detter J.C."/>
            <person name="Han C."/>
            <person name="Tapia R."/>
            <person name="Larimer F."/>
            <person name="Land M."/>
            <person name="Hauser L."/>
            <person name="Kyrpides N."/>
            <person name="Mikhailova N."/>
            <person name="Balakrishnan V."/>
            <person name="Glasner J."/>
            <person name="Perna N.T."/>
        </authorList>
    </citation>
    <scope>NUCLEOTIDE SEQUENCE [LARGE SCALE GENOMIC DNA]</scope>
    <source>
        <strain>PC1</strain>
    </source>
</reference>
<comment type="function">
    <text evidence="1">Has an important function as a repair enzyme for proteins that have been inactivated by oxidation. Catalyzes the reversible oxidation-reduction of methionine sulfoxide in proteins to methionine.</text>
</comment>
<comment type="catalytic activity">
    <reaction evidence="1">
        <text>L-methionyl-[protein] + [thioredoxin]-disulfide + H2O = L-methionyl-(S)-S-oxide-[protein] + [thioredoxin]-dithiol</text>
        <dbReference type="Rhea" id="RHEA:14217"/>
        <dbReference type="Rhea" id="RHEA-COMP:10698"/>
        <dbReference type="Rhea" id="RHEA-COMP:10700"/>
        <dbReference type="Rhea" id="RHEA-COMP:12313"/>
        <dbReference type="Rhea" id="RHEA-COMP:12315"/>
        <dbReference type="ChEBI" id="CHEBI:15377"/>
        <dbReference type="ChEBI" id="CHEBI:16044"/>
        <dbReference type="ChEBI" id="CHEBI:29950"/>
        <dbReference type="ChEBI" id="CHEBI:44120"/>
        <dbReference type="ChEBI" id="CHEBI:50058"/>
        <dbReference type="EC" id="1.8.4.11"/>
    </reaction>
</comment>
<comment type="catalytic activity">
    <reaction evidence="1">
        <text>[thioredoxin]-disulfide + L-methionine + H2O = L-methionine (S)-S-oxide + [thioredoxin]-dithiol</text>
        <dbReference type="Rhea" id="RHEA:19993"/>
        <dbReference type="Rhea" id="RHEA-COMP:10698"/>
        <dbReference type="Rhea" id="RHEA-COMP:10700"/>
        <dbReference type="ChEBI" id="CHEBI:15377"/>
        <dbReference type="ChEBI" id="CHEBI:29950"/>
        <dbReference type="ChEBI" id="CHEBI:50058"/>
        <dbReference type="ChEBI" id="CHEBI:57844"/>
        <dbReference type="ChEBI" id="CHEBI:58772"/>
        <dbReference type="EC" id="1.8.4.11"/>
    </reaction>
</comment>
<comment type="similarity">
    <text evidence="1">Belongs to the MsrA Met sulfoxide reductase family.</text>
</comment>